<keyword id="KW-0145">Chemotaxis</keyword>
<keyword id="KW-0963">Cytoplasm</keyword>
<keyword id="KW-0378">Hydrolase</keyword>
<keyword id="KW-0597">Phosphoprotein</keyword>
<accession>Q57N81</accession>
<name>CHEB_SALCH</name>
<dbReference type="EC" id="3.1.1.61" evidence="1"/>
<dbReference type="EC" id="3.5.1.44" evidence="1"/>
<dbReference type="EMBL" id="AE017220">
    <property type="protein sequence ID" value="AAX65830.1"/>
    <property type="molecule type" value="Genomic_DNA"/>
</dbReference>
<dbReference type="RefSeq" id="WP_000036389.1">
    <property type="nucleotide sequence ID" value="NC_006905.1"/>
</dbReference>
<dbReference type="SMR" id="Q57N81"/>
<dbReference type="KEGG" id="sec:SCH_1924"/>
<dbReference type="HOGENOM" id="CLU_000445_51_0_6"/>
<dbReference type="Proteomes" id="UP000000538">
    <property type="component" value="Chromosome"/>
</dbReference>
<dbReference type="GO" id="GO:0005737">
    <property type="term" value="C:cytoplasm"/>
    <property type="evidence" value="ECO:0007669"/>
    <property type="project" value="UniProtKB-SubCell"/>
</dbReference>
<dbReference type="GO" id="GO:0000156">
    <property type="term" value="F:phosphorelay response regulator activity"/>
    <property type="evidence" value="ECO:0007669"/>
    <property type="project" value="InterPro"/>
</dbReference>
<dbReference type="GO" id="GO:0008984">
    <property type="term" value="F:protein-glutamate methylesterase activity"/>
    <property type="evidence" value="ECO:0007669"/>
    <property type="project" value="UniProtKB-UniRule"/>
</dbReference>
<dbReference type="GO" id="GO:0050568">
    <property type="term" value="F:protein-glutamine glutaminase activity"/>
    <property type="evidence" value="ECO:0007669"/>
    <property type="project" value="UniProtKB-UniRule"/>
</dbReference>
<dbReference type="GO" id="GO:0006935">
    <property type="term" value="P:chemotaxis"/>
    <property type="evidence" value="ECO:0007669"/>
    <property type="project" value="UniProtKB-UniRule"/>
</dbReference>
<dbReference type="CDD" id="cd16351">
    <property type="entry name" value="CheB_like"/>
    <property type="match status" value="1"/>
</dbReference>
<dbReference type="CDD" id="cd17541">
    <property type="entry name" value="REC_CheB-like"/>
    <property type="match status" value="1"/>
</dbReference>
<dbReference type="FunFam" id="3.40.50.180:FF:000001">
    <property type="entry name" value="Protein-glutamate methylesterase/protein-glutamine glutaminase"/>
    <property type="match status" value="1"/>
</dbReference>
<dbReference type="FunFam" id="3.40.50.2300:FF:000060">
    <property type="entry name" value="Protein-glutamate methylesterase/protein-glutamine glutaminase"/>
    <property type="match status" value="1"/>
</dbReference>
<dbReference type="Gene3D" id="3.40.50.2300">
    <property type="match status" value="1"/>
</dbReference>
<dbReference type="Gene3D" id="3.40.50.180">
    <property type="entry name" value="Methylesterase CheB, C-terminal domain"/>
    <property type="match status" value="1"/>
</dbReference>
<dbReference type="HAMAP" id="MF_00099">
    <property type="entry name" value="CheB_chemtxs"/>
    <property type="match status" value="1"/>
</dbReference>
<dbReference type="InterPro" id="IPR008248">
    <property type="entry name" value="CheB-like"/>
</dbReference>
<dbReference type="InterPro" id="IPR035909">
    <property type="entry name" value="CheB_C"/>
</dbReference>
<dbReference type="InterPro" id="IPR011006">
    <property type="entry name" value="CheY-like_superfamily"/>
</dbReference>
<dbReference type="InterPro" id="IPR000673">
    <property type="entry name" value="Sig_transdc_resp-reg_Me-estase"/>
</dbReference>
<dbReference type="InterPro" id="IPR001789">
    <property type="entry name" value="Sig_transdc_resp-reg_receiver"/>
</dbReference>
<dbReference type="NCBIfam" id="NF001965">
    <property type="entry name" value="PRK00742.1"/>
    <property type="match status" value="1"/>
</dbReference>
<dbReference type="NCBIfam" id="NF009206">
    <property type="entry name" value="PRK12555.1"/>
    <property type="match status" value="1"/>
</dbReference>
<dbReference type="PANTHER" id="PTHR42872">
    <property type="entry name" value="PROTEIN-GLUTAMATE METHYLESTERASE/PROTEIN-GLUTAMINE GLUTAMINASE"/>
    <property type="match status" value="1"/>
</dbReference>
<dbReference type="PANTHER" id="PTHR42872:SF6">
    <property type="entry name" value="PROTEIN-GLUTAMATE METHYLESTERASE_PROTEIN-GLUTAMINE GLUTAMINASE"/>
    <property type="match status" value="1"/>
</dbReference>
<dbReference type="Pfam" id="PF01339">
    <property type="entry name" value="CheB_methylest"/>
    <property type="match status" value="1"/>
</dbReference>
<dbReference type="Pfam" id="PF00072">
    <property type="entry name" value="Response_reg"/>
    <property type="match status" value="1"/>
</dbReference>
<dbReference type="PIRSF" id="PIRSF000876">
    <property type="entry name" value="RR_chemtxs_CheB"/>
    <property type="match status" value="1"/>
</dbReference>
<dbReference type="SMART" id="SM00448">
    <property type="entry name" value="REC"/>
    <property type="match status" value="1"/>
</dbReference>
<dbReference type="SUPFAM" id="SSF52172">
    <property type="entry name" value="CheY-like"/>
    <property type="match status" value="1"/>
</dbReference>
<dbReference type="SUPFAM" id="SSF52738">
    <property type="entry name" value="Methylesterase CheB, C-terminal domain"/>
    <property type="match status" value="1"/>
</dbReference>
<dbReference type="PROSITE" id="PS50122">
    <property type="entry name" value="CHEB"/>
    <property type="match status" value="1"/>
</dbReference>
<dbReference type="PROSITE" id="PS50110">
    <property type="entry name" value="RESPONSE_REGULATORY"/>
    <property type="match status" value="1"/>
</dbReference>
<comment type="function">
    <text evidence="1">Involved in chemotaxis. Part of a chemotaxis signal transduction system that modulates chemotaxis in response to various stimuli. Catalyzes the demethylation of specific methylglutamate residues introduced into the chemoreceptors (methyl-accepting chemotaxis proteins or MCP) by CheR. Also mediates the irreversible deamidation of specific glutamine residues to glutamic acid.</text>
</comment>
<comment type="catalytic activity">
    <reaction evidence="1">
        <text>[protein]-L-glutamate 5-O-methyl ester + H2O = L-glutamyl-[protein] + methanol + H(+)</text>
        <dbReference type="Rhea" id="RHEA:23236"/>
        <dbReference type="Rhea" id="RHEA-COMP:10208"/>
        <dbReference type="Rhea" id="RHEA-COMP:10311"/>
        <dbReference type="ChEBI" id="CHEBI:15377"/>
        <dbReference type="ChEBI" id="CHEBI:15378"/>
        <dbReference type="ChEBI" id="CHEBI:17790"/>
        <dbReference type="ChEBI" id="CHEBI:29973"/>
        <dbReference type="ChEBI" id="CHEBI:82795"/>
        <dbReference type="EC" id="3.1.1.61"/>
    </reaction>
</comment>
<comment type="catalytic activity">
    <reaction evidence="1">
        <text>L-glutaminyl-[protein] + H2O = L-glutamyl-[protein] + NH4(+)</text>
        <dbReference type="Rhea" id="RHEA:16441"/>
        <dbReference type="Rhea" id="RHEA-COMP:10207"/>
        <dbReference type="Rhea" id="RHEA-COMP:10208"/>
        <dbReference type="ChEBI" id="CHEBI:15377"/>
        <dbReference type="ChEBI" id="CHEBI:28938"/>
        <dbReference type="ChEBI" id="CHEBI:29973"/>
        <dbReference type="ChEBI" id="CHEBI:30011"/>
        <dbReference type="EC" id="3.5.1.44"/>
    </reaction>
</comment>
<comment type="subcellular location">
    <subcellularLocation>
        <location evidence="1">Cytoplasm</location>
    </subcellularLocation>
</comment>
<comment type="domain">
    <text evidence="1">Contains a C-terminal catalytic domain, and an N-terminal region which modulates catalytic activity.</text>
</comment>
<comment type="PTM">
    <text evidence="1">Phosphorylated by CheA. Phosphorylation of the N-terminal regulatory domain activates the methylesterase activity.</text>
</comment>
<comment type="similarity">
    <text evidence="1">Belongs to the CheB family.</text>
</comment>
<gene>
    <name evidence="1" type="primary">cheB</name>
    <name type="ordered locus">SCH_1924</name>
</gene>
<evidence type="ECO:0000255" key="1">
    <source>
        <dbReference type="HAMAP-Rule" id="MF_00099"/>
    </source>
</evidence>
<feature type="chain" id="PRO_0000225483" description="Protein-glutamate methylesterase/protein-glutamine glutaminase">
    <location>
        <begin position="1"/>
        <end position="349"/>
    </location>
</feature>
<feature type="domain" description="Response regulatory" evidence="1">
    <location>
        <begin position="5"/>
        <end position="122"/>
    </location>
</feature>
<feature type="domain" description="CheB-type methylesterase" evidence="1">
    <location>
        <begin position="152"/>
        <end position="344"/>
    </location>
</feature>
<feature type="active site" evidence="1">
    <location>
        <position position="164"/>
    </location>
</feature>
<feature type="active site" evidence="1">
    <location>
        <position position="190"/>
    </location>
</feature>
<feature type="active site" evidence="1">
    <location>
        <position position="286"/>
    </location>
</feature>
<feature type="modified residue" description="4-aspartylphosphate" evidence="1">
    <location>
        <position position="56"/>
    </location>
</feature>
<proteinExistence type="inferred from homology"/>
<reference key="1">
    <citation type="journal article" date="2005" name="Nucleic Acids Res.">
        <title>The genome sequence of Salmonella enterica serovar Choleraesuis, a highly invasive and resistant zoonotic pathogen.</title>
        <authorList>
            <person name="Chiu C.-H."/>
            <person name="Tang P."/>
            <person name="Chu C."/>
            <person name="Hu S."/>
            <person name="Bao Q."/>
            <person name="Yu J."/>
            <person name="Chou Y.-Y."/>
            <person name="Wang H.-S."/>
            <person name="Lee Y.-S."/>
        </authorList>
    </citation>
    <scope>NUCLEOTIDE SEQUENCE [LARGE SCALE GENOMIC DNA]</scope>
    <source>
        <strain>SC-B67</strain>
    </source>
</reference>
<organism>
    <name type="scientific">Salmonella choleraesuis (strain SC-B67)</name>
    <dbReference type="NCBI Taxonomy" id="321314"/>
    <lineage>
        <taxon>Bacteria</taxon>
        <taxon>Pseudomonadati</taxon>
        <taxon>Pseudomonadota</taxon>
        <taxon>Gammaproteobacteria</taxon>
        <taxon>Enterobacterales</taxon>
        <taxon>Enterobacteriaceae</taxon>
        <taxon>Salmonella</taxon>
    </lineage>
</organism>
<protein>
    <recommendedName>
        <fullName evidence="1">Protein-glutamate methylesterase/protein-glutamine glutaminase</fullName>
        <ecNumber evidence="1">3.1.1.61</ecNumber>
        <ecNumber evidence="1">3.5.1.44</ecNumber>
    </recommendedName>
</protein>
<sequence>MSKIRVLSVDDSALMRQIMTEIINSHSDMEMVATAPDPLVARDLIKKFNPDVLTLDVEMPRMDGLDFLEKLMRLRPMPVVMVSSLTGKGSEVTLRALELGAIDFVTKPQLGIREGMLAYSEMIAEKVRTAARARIAAHKPMAAPATLKAGPLLSSEKLIAIGASTGGTEAIRHVLQPLPLSSPAVIITQHMPPGFTRSFAERLNKLCQISVKEAEDGERVLPGHAYIAPGDKHMELARSGANYQIKIHDGPPVNRHRPSVDVLFHSVAKHAGRNAVGVILTGMGNDGAAGMLAMYQAGAWTIAQNEASCVVFGMPREAINMGGVSEVVDLSQVSQQMLAKISAGQAIRI</sequence>